<organism>
    <name type="scientific">Drosophila pseudoobscura pseudoobscura</name>
    <name type="common">Fruit fly</name>
    <dbReference type="NCBI Taxonomy" id="46245"/>
    <lineage>
        <taxon>Eukaryota</taxon>
        <taxon>Metazoa</taxon>
        <taxon>Ecdysozoa</taxon>
        <taxon>Arthropoda</taxon>
        <taxon>Hexapoda</taxon>
        <taxon>Insecta</taxon>
        <taxon>Pterygota</taxon>
        <taxon>Neoptera</taxon>
        <taxon>Endopterygota</taxon>
        <taxon>Diptera</taxon>
        <taxon>Brachycera</taxon>
        <taxon>Muscomorpha</taxon>
        <taxon>Ephydroidea</taxon>
        <taxon>Drosophilidae</taxon>
        <taxon>Drosophila</taxon>
        <taxon>Sophophora</taxon>
    </lineage>
</organism>
<keyword id="KW-0456">Lyase</keyword>
<keyword id="KW-0472">Membrane</keyword>
<keyword id="KW-0479">Metal-binding</keyword>
<keyword id="KW-0496">Mitochondrion</keyword>
<keyword id="KW-0999">Mitochondrion inner membrane</keyword>
<keyword id="KW-1185">Reference proteome</keyword>
<keyword id="KW-0831">Ubiquinone biosynthesis</keyword>
<keyword id="KW-0862">Zinc</keyword>
<proteinExistence type="inferred from homology"/>
<gene>
    <name type="ORF">GA16732</name>
</gene>
<protein>
    <recommendedName>
        <fullName evidence="1">Ubiquinone biosynthesis protein COQ4 homolog, mitochondrial</fullName>
    </recommendedName>
    <alternativeName>
        <fullName>4-hydroxy-3-methoxy-5-polyprenylbenzoate decarboxylase</fullName>
        <ecNumber evidence="1">4.1.1.130</ecNumber>
    </alternativeName>
    <alternativeName>
        <fullName evidence="1">Coenzyme Q biosynthesis protein 4 homolog</fullName>
    </alternativeName>
</protein>
<feature type="chain" id="PRO_0000388066" description="Ubiquinone biosynthesis protein COQ4 homolog, mitochondrial">
    <location>
        <begin position="1"/>
        <end position="267"/>
    </location>
</feature>
<feature type="binding site" evidence="1">
    <location>
        <position position="170"/>
    </location>
    <ligand>
        <name>Zn(2+)</name>
        <dbReference type="ChEBI" id="CHEBI:29105"/>
    </ligand>
</feature>
<feature type="binding site" evidence="1">
    <location>
        <position position="171"/>
    </location>
    <ligand>
        <name>Zn(2+)</name>
        <dbReference type="ChEBI" id="CHEBI:29105"/>
    </ligand>
</feature>
<feature type="binding site" evidence="1">
    <location>
        <position position="174"/>
    </location>
    <ligand>
        <name>Zn(2+)</name>
        <dbReference type="ChEBI" id="CHEBI:29105"/>
    </ligand>
</feature>
<feature type="binding site" evidence="1">
    <location>
        <position position="186"/>
    </location>
    <ligand>
        <name>Zn(2+)</name>
        <dbReference type="ChEBI" id="CHEBI:29105"/>
    </ligand>
</feature>
<name>COQ4_DROPS</name>
<accession>Q2LZH7</accession>
<reference key="1">
    <citation type="journal article" date="2005" name="Genome Res.">
        <title>Comparative genome sequencing of Drosophila pseudoobscura: chromosomal, gene, and cis-element evolution.</title>
        <authorList>
            <person name="Richards S."/>
            <person name="Liu Y."/>
            <person name="Bettencourt B.R."/>
            <person name="Hradecky P."/>
            <person name="Letovsky S."/>
            <person name="Nielsen R."/>
            <person name="Thornton K."/>
            <person name="Hubisz M.J."/>
            <person name="Chen R."/>
            <person name="Meisel R.P."/>
            <person name="Couronne O."/>
            <person name="Hua S."/>
            <person name="Smith M.A."/>
            <person name="Zhang P."/>
            <person name="Liu J."/>
            <person name="Bussemaker H.J."/>
            <person name="van Batenburg M.F."/>
            <person name="Howells S.L."/>
            <person name="Scherer S.E."/>
            <person name="Sodergren E."/>
            <person name="Matthews B.B."/>
            <person name="Crosby M.A."/>
            <person name="Schroeder A.J."/>
            <person name="Ortiz-Barrientos D."/>
            <person name="Rives C.M."/>
            <person name="Metzker M.L."/>
            <person name="Muzny D.M."/>
            <person name="Scott G."/>
            <person name="Steffen D."/>
            <person name="Wheeler D.A."/>
            <person name="Worley K.C."/>
            <person name="Havlak P."/>
            <person name="Durbin K.J."/>
            <person name="Egan A."/>
            <person name="Gill R."/>
            <person name="Hume J."/>
            <person name="Morgan M.B."/>
            <person name="Miner G."/>
            <person name="Hamilton C."/>
            <person name="Huang Y."/>
            <person name="Waldron L."/>
            <person name="Verduzco D."/>
            <person name="Clerc-Blankenburg K.P."/>
            <person name="Dubchak I."/>
            <person name="Noor M.A.F."/>
            <person name="Anderson W."/>
            <person name="White K.P."/>
            <person name="Clark A.G."/>
            <person name="Schaeffer S.W."/>
            <person name="Gelbart W.M."/>
            <person name="Weinstock G.M."/>
            <person name="Gibbs R.A."/>
        </authorList>
    </citation>
    <scope>NUCLEOTIDE SEQUENCE [LARGE SCALE GENOMIC DNA]</scope>
    <source>
        <strain>MV2-25 / Tucson 14011-0121.94</strain>
    </source>
</reference>
<evidence type="ECO:0000255" key="1">
    <source>
        <dbReference type="HAMAP-Rule" id="MF_03111"/>
    </source>
</evidence>
<evidence type="ECO:0000305" key="2"/>
<dbReference type="EC" id="4.1.1.130" evidence="1"/>
<dbReference type="EMBL" id="CH379069">
    <property type="protein sequence ID" value="EAL29530.2"/>
    <property type="status" value="ALT_INIT"/>
    <property type="molecule type" value="Genomic_DNA"/>
</dbReference>
<dbReference type="SMR" id="Q2LZH7"/>
<dbReference type="FunCoup" id="Q2LZH7">
    <property type="interactions" value="737"/>
</dbReference>
<dbReference type="STRING" id="46245.Q2LZH7"/>
<dbReference type="EnsemblMetazoa" id="FBtr0373434">
    <property type="protein sequence ID" value="FBpp0335217"/>
    <property type="gene ID" value="FBgn0076747"/>
</dbReference>
<dbReference type="KEGG" id="dpo:4813856"/>
<dbReference type="CTD" id="51117"/>
<dbReference type="eggNOG" id="KOG3244">
    <property type="taxonomic scope" value="Eukaryota"/>
</dbReference>
<dbReference type="InParanoid" id="Q2LZH7"/>
<dbReference type="UniPathway" id="UPA00232"/>
<dbReference type="Proteomes" id="UP000001819">
    <property type="component" value="Chromosome X"/>
</dbReference>
<dbReference type="Bgee" id="FBgn0076747">
    <property type="expression patterns" value="Expressed in insect adult head and 2 other cell types or tissues"/>
</dbReference>
<dbReference type="ExpressionAtlas" id="Q2LZH7">
    <property type="expression patterns" value="baseline"/>
</dbReference>
<dbReference type="GO" id="GO:0031314">
    <property type="term" value="C:extrinsic component of mitochondrial inner membrane"/>
    <property type="evidence" value="ECO:0007669"/>
    <property type="project" value="UniProtKB-UniRule"/>
</dbReference>
<dbReference type="GO" id="GO:0006744">
    <property type="term" value="P:ubiquinone biosynthetic process"/>
    <property type="evidence" value="ECO:0007669"/>
    <property type="project" value="UniProtKB-UniRule"/>
</dbReference>
<dbReference type="HAMAP" id="MF_03111">
    <property type="entry name" value="Coq4"/>
    <property type="match status" value="1"/>
</dbReference>
<dbReference type="InterPro" id="IPR007715">
    <property type="entry name" value="Coq4"/>
</dbReference>
<dbReference type="InterPro" id="IPR027540">
    <property type="entry name" value="Coq4_euk"/>
</dbReference>
<dbReference type="PANTHER" id="PTHR12922">
    <property type="entry name" value="UBIQUINONE BIOSYNTHESIS PROTEIN"/>
    <property type="match status" value="1"/>
</dbReference>
<dbReference type="PANTHER" id="PTHR12922:SF7">
    <property type="entry name" value="UBIQUINONE BIOSYNTHESIS PROTEIN COQ4 HOMOLOG, MITOCHONDRIAL"/>
    <property type="match status" value="1"/>
</dbReference>
<dbReference type="Pfam" id="PF05019">
    <property type="entry name" value="Coq4"/>
    <property type="match status" value="1"/>
</dbReference>
<comment type="function">
    <text evidence="1">Lyase that catalyzes the C1-decarboxylation of 4-hydroxy-3-methoxy-5-(all-trans-polyprenyl)benzoic acid into 2-methoxy-6-(all-trans-polyprenyl)phenol during ubiquinone biosynthesis.</text>
</comment>
<comment type="catalytic activity">
    <reaction evidence="1">
        <text>a 4-hydroxy-3-methoxy-5-(all-trans-polyprenyl)benzoate + H(+) = a 2-methoxy-6-(all-trans-polyprenyl)phenol + CO2</text>
        <dbReference type="Rhea" id="RHEA:81179"/>
        <dbReference type="Rhea" id="RHEA-COMP:9551"/>
        <dbReference type="Rhea" id="RHEA-COMP:10931"/>
        <dbReference type="ChEBI" id="CHEBI:15378"/>
        <dbReference type="ChEBI" id="CHEBI:16526"/>
        <dbReference type="ChEBI" id="CHEBI:62731"/>
        <dbReference type="ChEBI" id="CHEBI:84443"/>
        <dbReference type="EC" id="4.1.1.130"/>
    </reaction>
</comment>
<comment type="cofactor">
    <cofactor evidence="1">
        <name>Zn(2+)</name>
        <dbReference type="ChEBI" id="CHEBI:29105"/>
    </cofactor>
</comment>
<comment type="pathway">
    <text evidence="1">Cofactor biosynthesis; ubiquinone biosynthesis.</text>
</comment>
<comment type="subunit">
    <text evidence="1">Component of a multi-subunit COQ enzyme complex.</text>
</comment>
<comment type="subcellular location">
    <subcellularLocation>
        <location evidence="1">Mitochondrion inner membrane</location>
        <topology evidence="1">Peripheral membrane protein</topology>
        <orientation evidence="1">Matrix side</orientation>
    </subcellularLocation>
</comment>
<comment type="miscellaneous">
    <text evidence="1">This protein may be expected to contain an N-terminal transit peptide but none has been predicted.</text>
</comment>
<comment type="similarity">
    <text evidence="1">Belongs to the COQ4 family.</text>
</comment>
<comment type="sequence caution" evidence="2">
    <conflict type="erroneous initiation">
        <sequence resource="EMBL-CDS" id="EAL29530"/>
    </conflict>
</comment>
<sequence length="267" mass="30806">MMQRCWRLPVPLGKRGLAVVTHTRQAVVSDNPEAENLDGFEQQYLKERIEITTFQRMLLGAGSSIAAILDPRRHDMIACLGETTGEDALWNIMDTMHESEEGQRIMVEKPRIHTSTIDFKRLESLPADTFGAAYVKFLKDNKVTPDSRMAVRFLEDPKLAYLMTRYRECHDLIHTVLDMPTNMLGEVAVKWVEALNTGLPMCYGGAVFGAVRLRPKQRRAYLKHYLPWALENGKQMKPLMPVYWEERWEQNVNELRAELGIKLLNKF</sequence>